<comment type="function">
    <text evidence="4">Possesses a potent antimicrobial activity against Gram-positive bacteria B.megaterium, C.glutamicum and S.aureus and mollicutes A.laidlawii and S.melliferum (PubMed:10880984). Less active against Gram-negative bacteria B.cepacia, P.aeruginosa, S.typhimurium and S.meliloti. Probably acts by disturbing membrane functions with its amphipathic structure (PubMed:10880984).</text>
</comment>
<comment type="subcellular location">
    <subcellularLocation>
        <location evidence="4">Secreted</location>
    </subcellularLocation>
    <subcellularLocation>
        <location evidence="8">Target cell membrane</location>
    </subcellularLocation>
</comment>
<comment type="tissue specificity">
    <text evidence="4">Highest expression in skin and to a lesser extent in brain and intestine.</text>
</comment>
<comment type="mass spectrometry" mass="3194.72" error="0.1" method="Electrospray" evidence="4"/>
<comment type="miscellaneous">
    <text>The sequence shown corresponds to the dermatoxin isolated from frog skin. A variant of it is present in frog brain.</text>
</comment>
<comment type="similarity">
    <text evidence="7">Belongs to the frog skin active peptide (FSAP) family. Dermatoxin subfamily.</text>
</comment>
<accession>Q9PT75</accession>
<accession>P81566</accession>
<sequence length="77" mass="8378">MAFLKKSLFLVLFLGLVPLSLCESEKREGENEEEQEDDQSEEKRSLGSFLKGVGTTLASVGKVVSDQFGKLLQAGQG</sequence>
<evidence type="ECO:0000250" key="1">
    <source>
        <dbReference type="UniProtKB" id="Q5DVA5"/>
    </source>
</evidence>
<evidence type="ECO:0000255" key="2"/>
<evidence type="ECO:0000256" key="3">
    <source>
        <dbReference type="SAM" id="MobiDB-lite"/>
    </source>
</evidence>
<evidence type="ECO:0000269" key="4">
    <source>
    </source>
</evidence>
<evidence type="ECO:0000303" key="5">
    <source>
    </source>
</evidence>
<evidence type="ECO:0000303" key="6">
    <source>
    </source>
</evidence>
<evidence type="ECO:0000305" key="7"/>
<evidence type="ECO:0000305" key="8">
    <source>
    </source>
</evidence>
<protein>
    <recommendedName>
        <fullName evidence="6">Dermatoxin-B1</fullName>
        <shortName evidence="6">DRT-B1</shortName>
    </recommendedName>
    <alternativeName>
        <fullName evidence="5">Dermatoxin</fullName>
    </alternativeName>
</protein>
<feature type="signal peptide" evidence="2">
    <location>
        <begin position="1"/>
        <end position="22"/>
    </location>
</feature>
<feature type="propeptide" id="PRO_0000007112" evidence="8">
    <location>
        <begin position="23"/>
        <end position="42"/>
    </location>
</feature>
<feature type="peptide" id="PRO_0000007113" description="Dermatoxin-B1" evidence="4">
    <location>
        <begin position="45"/>
        <end position="76"/>
    </location>
</feature>
<feature type="region of interest" description="Disordered" evidence="3">
    <location>
        <begin position="24"/>
        <end position="45"/>
    </location>
</feature>
<feature type="compositionally biased region" description="Acidic residues" evidence="3">
    <location>
        <begin position="30"/>
        <end position="40"/>
    </location>
</feature>
<feature type="modified residue" description="Glutamine amide" evidence="1">
    <location>
        <position position="76"/>
    </location>
</feature>
<feature type="sequence variant" description="In frog brain.">
    <original>L</original>
    <variation>I</variation>
    <location>
        <position position="21"/>
    </location>
</feature>
<feature type="sequence variant" description="In frog brain.">
    <original>S</original>
    <variation>E</variation>
    <location>
        <position position="24"/>
    </location>
</feature>
<dbReference type="EMBL" id="AJ251875">
    <property type="protein sequence ID" value="CAB63924.1"/>
    <property type="molecule type" value="mRNA"/>
</dbReference>
<dbReference type="GO" id="GO:0005576">
    <property type="term" value="C:extracellular region"/>
    <property type="evidence" value="ECO:0007669"/>
    <property type="project" value="UniProtKB-SubCell"/>
</dbReference>
<dbReference type="GO" id="GO:0016020">
    <property type="term" value="C:membrane"/>
    <property type="evidence" value="ECO:0007669"/>
    <property type="project" value="UniProtKB-KW"/>
</dbReference>
<dbReference type="GO" id="GO:0044218">
    <property type="term" value="C:other organism cell membrane"/>
    <property type="evidence" value="ECO:0007669"/>
    <property type="project" value="UniProtKB-KW"/>
</dbReference>
<dbReference type="GO" id="GO:0042742">
    <property type="term" value="P:defense response to bacterium"/>
    <property type="evidence" value="ECO:0007669"/>
    <property type="project" value="UniProtKB-KW"/>
</dbReference>
<dbReference type="InterPro" id="IPR004275">
    <property type="entry name" value="Frog_antimicrobial_propeptide"/>
</dbReference>
<dbReference type="InterPro" id="IPR016322">
    <property type="entry name" value="FSAP"/>
</dbReference>
<dbReference type="Pfam" id="PF03032">
    <property type="entry name" value="FSAP_sig_propep"/>
    <property type="match status" value="1"/>
</dbReference>
<dbReference type="PIRSF" id="PIRSF001822">
    <property type="entry name" value="Dermaseptin_precursor"/>
    <property type="match status" value="1"/>
</dbReference>
<proteinExistence type="evidence at protein level"/>
<reference key="1">
    <citation type="journal article" date="2000" name="Eur. J. Biochem.">
        <title>Isolation of dermatoxin from frog skin, an antibacterial peptide encoded by a novel member of the dermaseptin genes family.</title>
        <authorList>
            <person name="Amiche M."/>
            <person name="Seon A.A."/>
            <person name="Wroblewski H."/>
            <person name="Nicolas P."/>
        </authorList>
    </citation>
    <scope>NUCLEOTIDE SEQUENCE [MRNA]</scope>
    <scope>PROTEIN SEQUENCE OF 45-76</scope>
    <scope>FUNCTION</scope>
    <scope>SUBCELLULAR LOCATION</scope>
    <scope>TISSUE SPECIFICITY</scope>
    <scope>MASS SPECTROMETRY</scope>
    <source>
        <tissue>Skin secretion</tissue>
    </source>
</reference>
<reference key="2">
    <citation type="journal article" date="2008" name="Peptides">
        <title>A consistent nomenclature of antimicrobial peptides isolated from frogs of the subfamily Phyllomedusinae.</title>
        <authorList>
            <person name="Amiche M."/>
            <person name="Ladram A."/>
            <person name="Nicolas P."/>
        </authorList>
    </citation>
    <scope>NOMENCLATURE</scope>
</reference>
<keyword id="KW-0027">Amidation</keyword>
<keyword id="KW-0878">Amphibian defense peptide</keyword>
<keyword id="KW-0044">Antibiotic</keyword>
<keyword id="KW-0929">Antimicrobial</keyword>
<keyword id="KW-0165">Cleavage on pair of basic residues</keyword>
<keyword id="KW-0903">Direct protein sequencing</keyword>
<keyword id="KW-0472">Membrane</keyword>
<keyword id="KW-0964">Secreted</keyword>
<keyword id="KW-0732">Signal</keyword>
<keyword id="KW-1052">Target cell membrane</keyword>
<keyword id="KW-1053">Target membrane</keyword>
<organism>
    <name type="scientific">Phyllomedusa bicolor</name>
    <name type="common">Two-colored leaf frog</name>
    <name type="synonym">Rana bicolor</name>
    <dbReference type="NCBI Taxonomy" id="8393"/>
    <lineage>
        <taxon>Eukaryota</taxon>
        <taxon>Metazoa</taxon>
        <taxon>Chordata</taxon>
        <taxon>Craniata</taxon>
        <taxon>Vertebrata</taxon>
        <taxon>Euteleostomi</taxon>
        <taxon>Amphibia</taxon>
        <taxon>Batrachia</taxon>
        <taxon>Anura</taxon>
        <taxon>Neobatrachia</taxon>
        <taxon>Hyloidea</taxon>
        <taxon>Hylidae</taxon>
        <taxon>Phyllomedusinae</taxon>
        <taxon>Phyllomedusa</taxon>
    </lineage>
</organism>
<name>DRT1_PHYBI</name>